<keyword id="KW-0456">Lyase</keyword>
<keyword id="KW-0507">mRNA processing</keyword>
<keyword id="KW-0539">Nucleus</keyword>
<keyword id="KW-0597">Phosphoprotein</keyword>
<keyword id="KW-1185">Reference proteome</keyword>
<keyword id="KW-0819">tRNA processing</keyword>
<protein>
    <recommendedName>
        <fullName>tRNA-splicing endonuclease subunit Sen2</fullName>
        <ecNumber>4.6.1.16</ecNumber>
    </recommendedName>
    <alternativeName>
        <fullName>tRNA-intron endonuclease Sen2</fullName>
    </alternativeName>
</protein>
<evidence type="ECO:0000250" key="1"/>
<evidence type="ECO:0000250" key="2">
    <source>
        <dbReference type="UniProtKB" id="Q6P7W5"/>
    </source>
</evidence>
<evidence type="ECO:0000256" key="3">
    <source>
        <dbReference type="SAM" id="MobiDB-lite"/>
    </source>
</evidence>
<evidence type="ECO:0000305" key="4"/>
<evidence type="ECO:0007744" key="5">
    <source>
    </source>
</evidence>
<dbReference type="EC" id="4.6.1.16"/>
<dbReference type="EMBL" id="BC087631">
    <property type="protein sequence ID" value="AAH87631.1"/>
    <property type="molecule type" value="mRNA"/>
</dbReference>
<dbReference type="RefSeq" id="NP_001014079.1">
    <property type="nucleotide sequence ID" value="NM_001014057.2"/>
</dbReference>
<dbReference type="RefSeq" id="XP_008761462.1">
    <property type="nucleotide sequence ID" value="XM_008763240.4"/>
</dbReference>
<dbReference type="RefSeq" id="XP_008761463.1">
    <property type="nucleotide sequence ID" value="XM_008763241.1"/>
</dbReference>
<dbReference type="RefSeq" id="XP_008761464.1">
    <property type="nucleotide sequence ID" value="XM_008763242.4"/>
</dbReference>
<dbReference type="SMR" id="Q5M954"/>
<dbReference type="FunCoup" id="Q5M954">
    <property type="interactions" value="1657"/>
</dbReference>
<dbReference type="STRING" id="10116.ENSRNOP00000073692"/>
<dbReference type="iPTMnet" id="Q5M954"/>
<dbReference type="PhosphoSitePlus" id="Q5M954"/>
<dbReference type="PaxDb" id="10116-ENSRNOP00000053267"/>
<dbReference type="Ensembl" id="ENSRNOT00000081957.2">
    <property type="protein sequence ID" value="ENSRNOP00000073692.1"/>
    <property type="gene ID" value="ENSRNOG00000060175.2"/>
</dbReference>
<dbReference type="GeneID" id="312649"/>
<dbReference type="KEGG" id="rno:312649"/>
<dbReference type="UCSC" id="RGD:1309946">
    <property type="organism name" value="rat"/>
</dbReference>
<dbReference type="AGR" id="RGD:1309946"/>
<dbReference type="CTD" id="80746"/>
<dbReference type="RGD" id="1309946">
    <property type="gene designation" value="Tsen2"/>
</dbReference>
<dbReference type="eggNOG" id="KOG4685">
    <property type="taxonomic scope" value="Eukaryota"/>
</dbReference>
<dbReference type="GeneTree" id="ENSGT00390000013266"/>
<dbReference type="HOGENOM" id="CLU_046429_1_0_1"/>
<dbReference type="InParanoid" id="Q5M954"/>
<dbReference type="OMA" id="LWRRWNP"/>
<dbReference type="OrthoDB" id="10249562at2759"/>
<dbReference type="PhylomeDB" id="Q5M954"/>
<dbReference type="PRO" id="PR:Q5M954"/>
<dbReference type="Proteomes" id="UP000002494">
    <property type="component" value="Chromosome 4"/>
</dbReference>
<dbReference type="Bgee" id="ENSRNOG00000060175">
    <property type="expression patterns" value="Expressed in stomach and 19 other cell types or tissues"/>
</dbReference>
<dbReference type="GO" id="GO:0005737">
    <property type="term" value="C:cytoplasm"/>
    <property type="evidence" value="ECO:0000318"/>
    <property type="project" value="GO_Central"/>
</dbReference>
<dbReference type="GO" id="GO:0005730">
    <property type="term" value="C:nucleolus"/>
    <property type="evidence" value="ECO:0007669"/>
    <property type="project" value="UniProtKB-SubCell"/>
</dbReference>
<dbReference type="GO" id="GO:0000214">
    <property type="term" value="C:tRNA-intron endonuclease complex"/>
    <property type="evidence" value="ECO:0000318"/>
    <property type="project" value="GO_Central"/>
</dbReference>
<dbReference type="GO" id="GO:0016829">
    <property type="term" value="F:lyase activity"/>
    <property type="evidence" value="ECO:0007669"/>
    <property type="project" value="UniProtKB-KW"/>
</dbReference>
<dbReference type="GO" id="GO:0003676">
    <property type="term" value="F:nucleic acid binding"/>
    <property type="evidence" value="ECO:0007669"/>
    <property type="project" value="InterPro"/>
</dbReference>
<dbReference type="GO" id="GO:0000213">
    <property type="term" value="F:tRNA-intron endonuclease activity"/>
    <property type="evidence" value="ECO:0000318"/>
    <property type="project" value="GO_Central"/>
</dbReference>
<dbReference type="GO" id="GO:0006397">
    <property type="term" value="P:mRNA processing"/>
    <property type="evidence" value="ECO:0007669"/>
    <property type="project" value="UniProtKB-KW"/>
</dbReference>
<dbReference type="GO" id="GO:0008033">
    <property type="term" value="P:tRNA processing"/>
    <property type="evidence" value="ECO:0000318"/>
    <property type="project" value="GO_Central"/>
</dbReference>
<dbReference type="GO" id="GO:0006388">
    <property type="term" value="P:tRNA splicing, via endonucleolytic cleavage and ligation"/>
    <property type="evidence" value="ECO:0000266"/>
    <property type="project" value="RGD"/>
</dbReference>
<dbReference type="GO" id="GO:0000379">
    <property type="term" value="P:tRNA-type intron splice site recognition and cleavage"/>
    <property type="evidence" value="ECO:0000318"/>
    <property type="project" value="GO_Central"/>
</dbReference>
<dbReference type="CDD" id="cd22363">
    <property type="entry name" value="tRNA-intron_lyase_C"/>
    <property type="match status" value="1"/>
</dbReference>
<dbReference type="FunFam" id="3.40.1350.10:FF:000001">
    <property type="entry name" value="tRNA-splicing endonuclease subunit Sen2"/>
    <property type="match status" value="1"/>
</dbReference>
<dbReference type="Gene3D" id="3.40.1350.10">
    <property type="match status" value="1"/>
</dbReference>
<dbReference type="InterPro" id="IPR011856">
    <property type="entry name" value="tRNA_endonuc-like_dom_sf"/>
</dbReference>
<dbReference type="InterPro" id="IPR036167">
    <property type="entry name" value="tRNA_intron_Endo_cat-like_sf"/>
</dbReference>
<dbReference type="InterPro" id="IPR006677">
    <property type="entry name" value="tRNA_intron_Endonuc_cat-like"/>
</dbReference>
<dbReference type="InterPro" id="IPR006678">
    <property type="entry name" value="tRNA_intron_Endonuc_N"/>
</dbReference>
<dbReference type="InterPro" id="IPR006676">
    <property type="entry name" value="tRNA_splic"/>
</dbReference>
<dbReference type="InterPro" id="IPR016589">
    <property type="entry name" value="tRNA_splic_SEN2"/>
</dbReference>
<dbReference type="PANTHER" id="PTHR21227">
    <property type="entry name" value="TRNA-SPLICING ENDONUCLEASE SUBUNIT SEN2"/>
    <property type="match status" value="1"/>
</dbReference>
<dbReference type="PANTHER" id="PTHR21227:SF0">
    <property type="entry name" value="TRNA-SPLICING ENDONUCLEASE SUBUNIT SEN2"/>
    <property type="match status" value="1"/>
</dbReference>
<dbReference type="Pfam" id="PF01974">
    <property type="entry name" value="tRNA_int_endo"/>
    <property type="match status" value="1"/>
</dbReference>
<dbReference type="Pfam" id="PF02778">
    <property type="entry name" value="tRNA_int_endo_N"/>
    <property type="match status" value="1"/>
</dbReference>
<dbReference type="PIRSF" id="PIRSF011789">
    <property type="entry name" value="tRNA_splic_SEN2"/>
    <property type="match status" value="1"/>
</dbReference>
<dbReference type="SUPFAM" id="SSF53032">
    <property type="entry name" value="tRNA-intron endonuclease catalytic domain-like"/>
    <property type="match status" value="1"/>
</dbReference>
<comment type="function">
    <text evidence="1">Constitutes one of the two catalytic subunit of the tRNA-splicing endonuclease complex, a complex responsible for identification and cleavage of the splice sites in pre-tRNA. It cleaves pre-tRNA at the 5'- and 3'-splice sites to release the intron. The products are an intron and two tRNA half-molecules bearing 2',3'-cyclic phosphate and 5'-OH termini. There are no conserved sequences at the splice sites, but the intron is invariably located at the same site in the gene, placing the splice sites an invariant distance from the constant structural features of the tRNA body. Probably carries the active site for 5'-splice site cleavage. The tRNA splicing endonuclease is also involved in mRNA processing via its association with pre-mRNA 3'-end processing factors, establishing a link between pre-tRNA splicing and pre-mRNA 3'-end formation, suggesting that the endonuclease subunits function in multiple RNA-processing events (By similarity).</text>
</comment>
<comment type="catalytic activity">
    <reaction>
        <text>pretRNA = a 3'-half-tRNA molecule with a 5'-OH end + a 5'-half-tRNA molecule with a 2',3'-cyclic phosphate end + an intron with a 2',3'-cyclic phosphate and a 5'-hydroxyl terminus.</text>
        <dbReference type="EC" id="4.6.1.16"/>
    </reaction>
</comment>
<comment type="subunit">
    <text evidence="1">tRNA splicing endonuclease is a heterotetramer composed of TSEN2, TSEN15, TSEN34/LENG5 and TSEN54. tRNA splicing endonuclease complex also contains proteins of the pre-mRNA 3'-end processing machinery such as CLP1, CPSF1, CPSF4 and CSTF2 (By similarity).</text>
</comment>
<comment type="subcellular location">
    <subcellularLocation>
        <location evidence="1">Nucleus</location>
    </subcellularLocation>
    <subcellularLocation>
        <location evidence="1">Nucleus</location>
        <location evidence="1">Nucleolus</location>
    </subcellularLocation>
    <text evidence="1">May be transiently localized in the nucleolus.</text>
</comment>
<comment type="similarity">
    <text evidence="4">Belongs to the tRNA-intron endonuclease family.</text>
</comment>
<accession>Q5M954</accession>
<reference key="1">
    <citation type="journal article" date="2004" name="Genome Res.">
        <title>The status, quality, and expansion of the NIH full-length cDNA project: the Mammalian Gene Collection (MGC).</title>
        <authorList>
            <consortium name="The MGC Project Team"/>
        </authorList>
    </citation>
    <scope>NUCLEOTIDE SEQUENCE [LARGE SCALE MRNA]</scope>
    <source>
        <tissue>Brain</tissue>
    </source>
</reference>
<reference key="2">
    <citation type="journal article" date="2012" name="Nat. Commun.">
        <title>Quantitative maps of protein phosphorylation sites across 14 different rat organs and tissues.</title>
        <authorList>
            <person name="Lundby A."/>
            <person name="Secher A."/>
            <person name="Lage K."/>
            <person name="Nordsborg N.B."/>
            <person name="Dmytriyev A."/>
            <person name="Lundby C."/>
            <person name="Olsen J.V."/>
        </authorList>
    </citation>
    <scope>PHOSPHORYLATION [LARGE SCALE ANALYSIS] AT SER-32 AND SER-147</scope>
    <scope>IDENTIFICATION BY MASS SPECTROMETRY [LARGE SCALE ANALYSIS]</scope>
</reference>
<sequence>MAEAVFRAPKRKRRVYESYESPLPIPFSQDQSPRKEFRIFQAEMISNNVVVRGTEDMEQLYGKGYFGKGILSRSRPNFTISNPKLAARWKGVQTDMPIITSEKYQHRVEWARDFMRRQGHDESTVQKILTDYTEPLEPPYRERKGESPQHEPLSSKADSSLEGREGKDELSVTTGGAGQSDDLQGLNTHSDCRQEGPGHATLTVASPSSLNGHAIEDPEALSQIPCCSQEALGQQDDLWPEASSQIAGESRAAHEYVLIEEELCDVQEGAAPHDELLKRKRLVCRRNPYRIFEYLQLSLEEAFFLAYALGCLSIYYEKEPLTIVKLWQAFTAVQPTFRTTYMAYHYFRSKGWVPKVGLKYGTDLLLYRKGPPFYHASYSVIIELVDDNFEGSLRRPFSWKSLAALSRVSGNVSKELMLCYLIKPSTMTNEDMETPECMRRIQVQEVILSRWVSSRERSDQDEL</sequence>
<organism>
    <name type="scientific">Rattus norvegicus</name>
    <name type="common">Rat</name>
    <dbReference type="NCBI Taxonomy" id="10116"/>
    <lineage>
        <taxon>Eukaryota</taxon>
        <taxon>Metazoa</taxon>
        <taxon>Chordata</taxon>
        <taxon>Craniata</taxon>
        <taxon>Vertebrata</taxon>
        <taxon>Euteleostomi</taxon>
        <taxon>Mammalia</taxon>
        <taxon>Eutheria</taxon>
        <taxon>Euarchontoglires</taxon>
        <taxon>Glires</taxon>
        <taxon>Rodentia</taxon>
        <taxon>Myomorpha</taxon>
        <taxon>Muroidea</taxon>
        <taxon>Muridae</taxon>
        <taxon>Murinae</taxon>
        <taxon>Rattus</taxon>
    </lineage>
</organism>
<gene>
    <name type="primary">Tsen2</name>
</gene>
<feature type="chain" id="PRO_0000109454" description="tRNA-splicing endonuclease subunit Sen2">
    <location>
        <begin position="1"/>
        <end position="463"/>
    </location>
</feature>
<feature type="region of interest" description="Disordered" evidence="3">
    <location>
        <begin position="120"/>
        <end position="213"/>
    </location>
</feature>
<feature type="compositionally biased region" description="Basic and acidic residues" evidence="3">
    <location>
        <begin position="139"/>
        <end position="149"/>
    </location>
</feature>
<feature type="compositionally biased region" description="Basic and acidic residues" evidence="3">
    <location>
        <begin position="159"/>
        <end position="170"/>
    </location>
</feature>
<feature type="active site" evidence="1">
    <location>
        <position position="367"/>
    </location>
</feature>
<feature type="active site" evidence="1">
    <location>
        <position position="375"/>
    </location>
</feature>
<feature type="active site" evidence="1">
    <location>
        <position position="414"/>
    </location>
</feature>
<feature type="modified residue" description="Phosphoserine" evidence="5">
    <location>
        <position position="32"/>
    </location>
</feature>
<feature type="modified residue" description="Phosphoserine" evidence="5">
    <location>
        <position position="147"/>
    </location>
</feature>
<feature type="modified residue" description="Phosphoserine" evidence="2">
    <location>
        <position position="406"/>
    </location>
</feature>
<feature type="modified residue" description="Phosphoserine" evidence="2">
    <location>
        <position position="409"/>
    </location>
</feature>
<feature type="modified residue" description="Phosphoserine" evidence="2">
    <location>
        <position position="413"/>
    </location>
</feature>
<name>SEN2_RAT</name>
<proteinExistence type="evidence at protein level"/>